<organism>
    <name type="scientific">Bacillus cereus (strain B4264)</name>
    <dbReference type="NCBI Taxonomy" id="405532"/>
    <lineage>
        <taxon>Bacteria</taxon>
        <taxon>Bacillati</taxon>
        <taxon>Bacillota</taxon>
        <taxon>Bacilli</taxon>
        <taxon>Bacillales</taxon>
        <taxon>Bacillaceae</taxon>
        <taxon>Bacillus</taxon>
        <taxon>Bacillus cereus group</taxon>
    </lineage>
</organism>
<comment type="subunit">
    <text evidence="1">Part of the 50S ribosomal subunit.</text>
</comment>
<comment type="similarity">
    <text evidence="1">Belongs to the universal ribosomal protein uL30 family.</text>
</comment>
<dbReference type="EMBL" id="CP001176">
    <property type="protein sequence ID" value="ACK59478.1"/>
    <property type="molecule type" value="Genomic_DNA"/>
</dbReference>
<dbReference type="RefSeq" id="WP_001085234.1">
    <property type="nucleotide sequence ID" value="NZ_VEHB01000017.1"/>
</dbReference>
<dbReference type="SMR" id="B7HJ66"/>
<dbReference type="GeneID" id="93010925"/>
<dbReference type="KEGG" id="bcb:BCB4264_A0149"/>
<dbReference type="HOGENOM" id="CLU_131047_2_1_9"/>
<dbReference type="Proteomes" id="UP000007096">
    <property type="component" value="Chromosome"/>
</dbReference>
<dbReference type="GO" id="GO:0022625">
    <property type="term" value="C:cytosolic large ribosomal subunit"/>
    <property type="evidence" value="ECO:0007669"/>
    <property type="project" value="TreeGrafter"/>
</dbReference>
<dbReference type="GO" id="GO:0003735">
    <property type="term" value="F:structural constituent of ribosome"/>
    <property type="evidence" value="ECO:0007669"/>
    <property type="project" value="InterPro"/>
</dbReference>
<dbReference type="GO" id="GO:0006412">
    <property type="term" value="P:translation"/>
    <property type="evidence" value="ECO:0007669"/>
    <property type="project" value="UniProtKB-UniRule"/>
</dbReference>
<dbReference type="CDD" id="cd01658">
    <property type="entry name" value="Ribosomal_L30"/>
    <property type="match status" value="1"/>
</dbReference>
<dbReference type="FunFam" id="3.30.1390.20:FF:000001">
    <property type="entry name" value="50S ribosomal protein L30"/>
    <property type="match status" value="1"/>
</dbReference>
<dbReference type="Gene3D" id="3.30.1390.20">
    <property type="entry name" value="Ribosomal protein L30, ferredoxin-like fold domain"/>
    <property type="match status" value="1"/>
</dbReference>
<dbReference type="HAMAP" id="MF_01371_B">
    <property type="entry name" value="Ribosomal_uL30_B"/>
    <property type="match status" value="1"/>
</dbReference>
<dbReference type="InterPro" id="IPR036919">
    <property type="entry name" value="Ribo_uL30_ferredoxin-like_sf"/>
</dbReference>
<dbReference type="InterPro" id="IPR005996">
    <property type="entry name" value="Ribosomal_uL30_bac-type"/>
</dbReference>
<dbReference type="InterPro" id="IPR018038">
    <property type="entry name" value="Ribosomal_uL30_CS"/>
</dbReference>
<dbReference type="InterPro" id="IPR016082">
    <property type="entry name" value="Ribosomal_uL30_ferredoxin-like"/>
</dbReference>
<dbReference type="NCBIfam" id="TIGR01308">
    <property type="entry name" value="rpmD_bact"/>
    <property type="match status" value="1"/>
</dbReference>
<dbReference type="PANTHER" id="PTHR15892:SF2">
    <property type="entry name" value="LARGE RIBOSOMAL SUBUNIT PROTEIN UL30M"/>
    <property type="match status" value="1"/>
</dbReference>
<dbReference type="PANTHER" id="PTHR15892">
    <property type="entry name" value="MITOCHONDRIAL RIBOSOMAL PROTEIN L30"/>
    <property type="match status" value="1"/>
</dbReference>
<dbReference type="Pfam" id="PF00327">
    <property type="entry name" value="Ribosomal_L30"/>
    <property type="match status" value="1"/>
</dbReference>
<dbReference type="PIRSF" id="PIRSF002211">
    <property type="entry name" value="Ribosomal_L30_bac-type"/>
    <property type="match status" value="1"/>
</dbReference>
<dbReference type="SUPFAM" id="SSF55129">
    <property type="entry name" value="Ribosomal protein L30p/L7e"/>
    <property type="match status" value="1"/>
</dbReference>
<dbReference type="PROSITE" id="PS00634">
    <property type="entry name" value="RIBOSOMAL_L30"/>
    <property type="match status" value="1"/>
</dbReference>
<accession>B7HJ66</accession>
<keyword id="KW-0687">Ribonucleoprotein</keyword>
<keyword id="KW-0689">Ribosomal protein</keyword>
<gene>
    <name evidence="1" type="primary">rpmD</name>
    <name type="ordered locus">BCB4264_A0149</name>
</gene>
<proteinExistence type="inferred from homology"/>
<protein>
    <recommendedName>
        <fullName evidence="1">Large ribosomal subunit protein uL30</fullName>
    </recommendedName>
    <alternativeName>
        <fullName evidence="2">50S ribosomal protein L30</fullName>
    </alternativeName>
</protein>
<reference key="1">
    <citation type="submission" date="2008-10" db="EMBL/GenBank/DDBJ databases">
        <title>Genome sequence of Bacillus cereus B4264.</title>
        <authorList>
            <person name="Dodson R.J."/>
            <person name="Durkin A.S."/>
            <person name="Rosovitz M.J."/>
            <person name="Rasko D.A."/>
            <person name="Hoffmaster A."/>
            <person name="Ravel J."/>
            <person name="Sutton G."/>
        </authorList>
    </citation>
    <scope>NUCLEOTIDE SEQUENCE [LARGE SCALE GENOMIC DNA]</scope>
    <source>
        <strain>B4264</strain>
    </source>
</reference>
<feature type="chain" id="PRO_1000144649" description="Large ribosomal subunit protein uL30">
    <location>
        <begin position="1"/>
        <end position="60"/>
    </location>
</feature>
<sequence length="60" mass="6556">MAKKLEITLTRSVIGRPQDQRATVEALGLKKLNSTVVKEETPAILGMINKVSHLVTVKEA</sequence>
<evidence type="ECO:0000255" key="1">
    <source>
        <dbReference type="HAMAP-Rule" id="MF_01371"/>
    </source>
</evidence>
<evidence type="ECO:0000305" key="2"/>
<name>RL30_BACC4</name>